<comment type="function">
    <text evidence="1">Catalyzes the formation of 4-diphosphocytidyl-2-C-methyl-D-erythritol from CTP and 2-C-methyl-D-erythritol 4-phosphate (MEP).</text>
</comment>
<comment type="catalytic activity">
    <reaction evidence="1">
        <text>2-C-methyl-D-erythritol 4-phosphate + CTP + H(+) = 4-CDP-2-C-methyl-D-erythritol + diphosphate</text>
        <dbReference type="Rhea" id="RHEA:13429"/>
        <dbReference type="ChEBI" id="CHEBI:15378"/>
        <dbReference type="ChEBI" id="CHEBI:33019"/>
        <dbReference type="ChEBI" id="CHEBI:37563"/>
        <dbReference type="ChEBI" id="CHEBI:57823"/>
        <dbReference type="ChEBI" id="CHEBI:58262"/>
        <dbReference type="EC" id="2.7.7.60"/>
    </reaction>
</comment>
<comment type="pathway">
    <text evidence="1">Isoprenoid biosynthesis; isopentenyl diphosphate biosynthesis via DXP pathway; isopentenyl diphosphate from 1-deoxy-D-xylulose 5-phosphate: step 2/6.</text>
</comment>
<comment type="similarity">
    <text evidence="1">Belongs to the IspD/TarI cytidylyltransferase family. IspD subfamily.</text>
</comment>
<gene>
    <name evidence="1" type="primary">ispD</name>
    <name type="ordered locus">A1S_1895</name>
</gene>
<evidence type="ECO:0000255" key="1">
    <source>
        <dbReference type="HAMAP-Rule" id="MF_00108"/>
    </source>
</evidence>
<proteinExistence type="inferred from homology"/>
<keyword id="KW-0414">Isoprene biosynthesis</keyword>
<keyword id="KW-0548">Nucleotidyltransferase</keyword>
<keyword id="KW-0808">Transferase</keyword>
<name>ISPD_ACIBT</name>
<accession>A3M5X8</accession>
<feature type="chain" id="PRO_1000094303" description="2-C-methyl-D-erythritol 4-phosphate cytidylyltransferase">
    <location>
        <begin position="1"/>
        <end position="238"/>
    </location>
</feature>
<feature type="site" description="Transition state stabilizer" evidence="1">
    <location>
        <position position="25"/>
    </location>
</feature>
<feature type="site" description="Transition state stabilizer" evidence="1">
    <location>
        <position position="32"/>
    </location>
</feature>
<feature type="site" description="Positions MEP for the nucleophilic attack" evidence="1">
    <location>
        <position position="164"/>
    </location>
</feature>
<feature type="site" description="Positions MEP for the nucleophilic attack" evidence="1">
    <location>
        <position position="220"/>
    </location>
</feature>
<reference key="1">
    <citation type="journal article" date="2007" name="Genes Dev.">
        <title>New insights into Acinetobacter baumannii pathogenesis revealed by high-density pyrosequencing and transposon mutagenesis.</title>
        <authorList>
            <person name="Smith M.G."/>
            <person name="Gianoulis T.A."/>
            <person name="Pukatzki S."/>
            <person name="Mekalanos J.J."/>
            <person name="Ornston L.N."/>
            <person name="Gerstein M."/>
            <person name="Snyder M."/>
        </authorList>
    </citation>
    <scope>NUCLEOTIDE SEQUENCE [LARGE SCALE GENOMIC DNA]</scope>
    <source>
        <strain>ATCC 17978 / DSM 105126 / CIP 53.77 / LMG 1025 / NCDC KC755 / 5377</strain>
    </source>
</reference>
<organism>
    <name type="scientific">Acinetobacter baumannii (strain ATCC 17978 / DSM 105126 / CIP 53.77 / LMG 1025 / NCDC KC755 / 5377)</name>
    <dbReference type="NCBI Taxonomy" id="400667"/>
    <lineage>
        <taxon>Bacteria</taxon>
        <taxon>Pseudomonadati</taxon>
        <taxon>Pseudomonadota</taxon>
        <taxon>Gammaproteobacteria</taxon>
        <taxon>Moraxellales</taxon>
        <taxon>Moraxellaceae</taxon>
        <taxon>Acinetobacter</taxon>
        <taxon>Acinetobacter calcoaceticus/baumannii complex</taxon>
    </lineage>
</organism>
<dbReference type="EC" id="2.7.7.60" evidence="1"/>
<dbReference type="EMBL" id="CP000521">
    <property type="protein sequence ID" value="ABO12322.2"/>
    <property type="molecule type" value="Genomic_DNA"/>
</dbReference>
<dbReference type="RefSeq" id="WP_001216207.1">
    <property type="nucleotide sequence ID" value="NZ_CP053098.1"/>
</dbReference>
<dbReference type="SMR" id="A3M5X8"/>
<dbReference type="KEGG" id="acb:A1S_1895"/>
<dbReference type="HOGENOM" id="CLU_061281_3_1_6"/>
<dbReference type="UniPathway" id="UPA00056">
    <property type="reaction ID" value="UER00093"/>
</dbReference>
<dbReference type="GO" id="GO:0050518">
    <property type="term" value="F:2-C-methyl-D-erythritol 4-phosphate cytidylyltransferase activity"/>
    <property type="evidence" value="ECO:0007669"/>
    <property type="project" value="UniProtKB-UniRule"/>
</dbReference>
<dbReference type="GO" id="GO:0019288">
    <property type="term" value="P:isopentenyl diphosphate biosynthetic process, methylerythritol 4-phosphate pathway"/>
    <property type="evidence" value="ECO:0007669"/>
    <property type="project" value="UniProtKB-UniRule"/>
</dbReference>
<dbReference type="CDD" id="cd02516">
    <property type="entry name" value="CDP-ME_synthetase"/>
    <property type="match status" value="1"/>
</dbReference>
<dbReference type="FunFam" id="3.90.550.10:FF:000003">
    <property type="entry name" value="2-C-methyl-D-erythritol 4-phosphate cytidylyltransferase"/>
    <property type="match status" value="1"/>
</dbReference>
<dbReference type="Gene3D" id="3.90.550.10">
    <property type="entry name" value="Spore Coat Polysaccharide Biosynthesis Protein SpsA, Chain A"/>
    <property type="match status" value="1"/>
</dbReference>
<dbReference type="HAMAP" id="MF_00108">
    <property type="entry name" value="IspD"/>
    <property type="match status" value="1"/>
</dbReference>
<dbReference type="InterPro" id="IPR001228">
    <property type="entry name" value="IspD"/>
</dbReference>
<dbReference type="InterPro" id="IPR034683">
    <property type="entry name" value="IspD/TarI"/>
</dbReference>
<dbReference type="InterPro" id="IPR050088">
    <property type="entry name" value="IspD/TarI_cytidylyltransf_bact"/>
</dbReference>
<dbReference type="InterPro" id="IPR018294">
    <property type="entry name" value="ISPD_synthase_CS"/>
</dbReference>
<dbReference type="InterPro" id="IPR029044">
    <property type="entry name" value="Nucleotide-diphossugar_trans"/>
</dbReference>
<dbReference type="NCBIfam" id="TIGR00453">
    <property type="entry name" value="ispD"/>
    <property type="match status" value="1"/>
</dbReference>
<dbReference type="PANTHER" id="PTHR32125">
    <property type="entry name" value="2-C-METHYL-D-ERYTHRITOL 4-PHOSPHATE CYTIDYLYLTRANSFERASE, CHLOROPLASTIC"/>
    <property type="match status" value="1"/>
</dbReference>
<dbReference type="PANTHER" id="PTHR32125:SF4">
    <property type="entry name" value="2-C-METHYL-D-ERYTHRITOL 4-PHOSPHATE CYTIDYLYLTRANSFERASE, CHLOROPLASTIC"/>
    <property type="match status" value="1"/>
</dbReference>
<dbReference type="Pfam" id="PF01128">
    <property type="entry name" value="IspD"/>
    <property type="match status" value="1"/>
</dbReference>
<dbReference type="SUPFAM" id="SSF53448">
    <property type="entry name" value="Nucleotide-diphospho-sugar transferases"/>
    <property type="match status" value="1"/>
</dbReference>
<dbReference type="PROSITE" id="PS01295">
    <property type="entry name" value="ISPD"/>
    <property type="match status" value="1"/>
</dbReference>
<protein>
    <recommendedName>
        <fullName evidence="1">2-C-methyl-D-erythritol 4-phosphate cytidylyltransferase</fullName>
        <ecNumber evidence="1">2.7.7.60</ecNumber>
    </recommendedName>
    <alternativeName>
        <fullName evidence="1">4-diphosphocytidyl-2C-methyl-D-erythritol synthase</fullName>
    </alternativeName>
    <alternativeName>
        <fullName evidence="1">MEP cytidylyltransferase</fullName>
        <shortName evidence="1">MCT</shortName>
    </alternativeName>
</protein>
<sequence>MRHLHHQTSQIKLWAVIPAAGSGSRFSKTELKQYQYIQDATVIEHTVKRLSQLPLTGYVLAIGKQDTFASTLSFQDKHKAHFCNGGVERVHSVLNALNYLSQIAEEDDWVLVHDAARPCVTFECLNTLVKNAIETNQSAILAIPVRDTLKQVNQEQQIDKTVSRELLWQAQTPQIAKIGILKKAIETALKNNLTITDEASALESIGESVQVVMGRSDNIKITYPDDLELARLILQSQN</sequence>